<comment type="function">
    <text evidence="1">Chaperone involved in the maturation of iron-sulfur cluster-containing proteins. Has a low intrinsic ATPase activity which is markedly stimulated by HscB. Involved in the maturation of IscU.</text>
</comment>
<comment type="similarity">
    <text evidence="1">Belongs to the heat shock protein 70 family.</text>
</comment>
<organism>
    <name type="scientific">Salmonella dublin (strain CT_02021853)</name>
    <dbReference type="NCBI Taxonomy" id="439851"/>
    <lineage>
        <taxon>Bacteria</taxon>
        <taxon>Pseudomonadati</taxon>
        <taxon>Pseudomonadota</taxon>
        <taxon>Gammaproteobacteria</taxon>
        <taxon>Enterobacterales</taxon>
        <taxon>Enterobacteriaceae</taxon>
        <taxon>Salmonella</taxon>
    </lineage>
</organism>
<reference key="1">
    <citation type="journal article" date="2011" name="J. Bacteriol.">
        <title>Comparative genomics of 28 Salmonella enterica isolates: evidence for CRISPR-mediated adaptive sublineage evolution.</title>
        <authorList>
            <person name="Fricke W.F."/>
            <person name="Mammel M.K."/>
            <person name="McDermott P.F."/>
            <person name="Tartera C."/>
            <person name="White D.G."/>
            <person name="Leclerc J.E."/>
            <person name="Ravel J."/>
            <person name="Cebula T.A."/>
        </authorList>
    </citation>
    <scope>NUCLEOTIDE SEQUENCE [LARGE SCALE GENOMIC DNA]</scope>
    <source>
        <strain>CT_02021853</strain>
    </source>
</reference>
<proteinExistence type="inferred from homology"/>
<accession>B5FR81</accession>
<gene>
    <name evidence="1" type="primary">hscA</name>
    <name type="ordered locus">SeD_A2913</name>
</gene>
<feature type="chain" id="PRO_1000131687" description="Chaperone protein HscA">
    <location>
        <begin position="1"/>
        <end position="616"/>
    </location>
</feature>
<dbReference type="EMBL" id="CP001144">
    <property type="protein sequence ID" value="ACH76711.1"/>
    <property type="molecule type" value="Genomic_DNA"/>
</dbReference>
<dbReference type="RefSeq" id="WP_001196651.1">
    <property type="nucleotide sequence ID" value="NC_011205.1"/>
</dbReference>
<dbReference type="SMR" id="B5FR81"/>
<dbReference type="KEGG" id="sed:SeD_A2913"/>
<dbReference type="HOGENOM" id="CLU_005965_2_1_6"/>
<dbReference type="Proteomes" id="UP000008322">
    <property type="component" value="Chromosome"/>
</dbReference>
<dbReference type="GO" id="GO:0005524">
    <property type="term" value="F:ATP binding"/>
    <property type="evidence" value="ECO:0007669"/>
    <property type="project" value="UniProtKB-KW"/>
</dbReference>
<dbReference type="GO" id="GO:0016887">
    <property type="term" value="F:ATP hydrolysis activity"/>
    <property type="evidence" value="ECO:0007669"/>
    <property type="project" value="UniProtKB-UniRule"/>
</dbReference>
<dbReference type="GO" id="GO:0140662">
    <property type="term" value="F:ATP-dependent protein folding chaperone"/>
    <property type="evidence" value="ECO:0007669"/>
    <property type="project" value="InterPro"/>
</dbReference>
<dbReference type="GO" id="GO:0051082">
    <property type="term" value="F:unfolded protein binding"/>
    <property type="evidence" value="ECO:0007669"/>
    <property type="project" value="InterPro"/>
</dbReference>
<dbReference type="GO" id="GO:0016226">
    <property type="term" value="P:iron-sulfur cluster assembly"/>
    <property type="evidence" value="ECO:0007669"/>
    <property type="project" value="InterPro"/>
</dbReference>
<dbReference type="CDD" id="cd10236">
    <property type="entry name" value="ASKHA_NBD_HSP70_HscA"/>
    <property type="match status" value="1"/>
</dbReference>
<dbReference type="FunFam" id="1.20.1270.10:FF:000006">
    <property type="entry name" value="Chaperone protein HscA"/>
    <property type="match status" value="1"/>
</dbReference>
<dbReference type="FunFam" id="3.30.420.40:FF:000046">
    <property type="entry name" value="Chaperone protein HscA"/>
    <property type="match status" value="1"/>
</dbReference>
<dbReference type="FunFam" id="3.90.640.10:FF:000013">
    <property type="entry name" value="Chaperone protein HscA"/>
    <property type="match status" value="1"/>
</dbReference>
<dbReference type="FunFam" id="2.60.34.10:FF:000005">
    <property type="entry name" value="Chaperone protein HscA homolog"/>
    <property type="match status" value="1"/>
</dbReference>
<dbReference type="Gene3D" id="1.20.1270.10">
    <property type="match status" value="1"/>
</dbReference>
<dbReference type="Gene3D" id="3.30.420.40">
    <property type="match status" value="2"/>
</dbReference>
<dbReference type="Gene3D" id="3.90.640.10">
    <property type="entry name" value="Actin, Chain A, domain 4"/>
    <property type="match status" value="1"/>
</dbReference>
<dbReference type="Gene3D" id="2.60.34.10">
    <property type="entry name" value="Substrate Binding Domain Of DNAk, Chain A, domain 1"/>
    <property type="match status" value="1"/>
</dbReference>
<dbReference type="HAMAP" id="MF_00679">
    <property type="entry name" value="HscA"/>
    <property type="match status" value="1"/>
</dbReference>
<dbReference type="InterPro" id="IPR043129">
    <property type="entry name" value="ATPase_NBD"/>
</dbReference>
<dbReference type="InterPro" id="IPR018181">
    <property type="entry name" value="Heat_shock_70_CS"/>
</dbReference>
<dbReference type="InterPro" id="IPR042039">
    <property type="entry name" value="HscA_NBD"/>
</dbReference>
<dbReference type="InterPro" id="IPR029048">
    <property type="entry name" value="HSP70_C_sf"/>
</dbReference>
<dbReference type="InterPro" id="IPR029047">
    <property type="entry name" value="HSP70_peptide-bd_sf"/>
</dbReference>
<dbReference type="InterPro" id="IPR013126">
    <property type="entry name" value="Hsp_70_fam"/>
</dbReference>
<dbReference type="InterPro" id="IPR010236">
    <property type="entry name" value="ISC_FeS_clus_asmbl_HscA"/>
</dbReference>
<dbReference type="NCBIfam" id="TIGR01991">
    <property type="entry name" value="HscA"/>
    <property type="match status" value="1"/>
</dbReference>
<dbReference type="NCBIfam" id="NF003520">
    <property type="entry name" value="PRK05183.1"/>
    <property type="match status" value="1"/>
</dbReference>
<dbReference type="PANTHER" id="PTHR19375">
    <property type="entry name" value="HEAT SHOCK PROTEIN 70KDA"/>
    <property type="match status" value="1"/>
</dbReference>
<dbReference type="Pfam" id="PF00012">
    <property type="entry name" value="HSP70"/>
    <property type="match status" value="1"/>
</dbReference>
<dbReference type="PRINTS" id="PR00301">
    <property type="entry name" value="HEATSHOCK70"/>
</dbReference>
<dbReference type="SUPFAM" id="SSF53067">
    <property type="entry name" value="Actin-like ATPase domain"/>
    <property type="match status" value="2"/>
</dbReference>
<dbReference type="SUPFAM" id="SSF100934">
    <property type="entry name" value="Heat shock protein 70kD (HSP70), C-terminal subdomain"/>
    <property type="match status" value="1"/>
</dbReference>
<dbReference type="SUPFAM" id="SSF100920">
    <property type="entry name" value="Heat shock protein 70kD (HSP70), peptide-binding domain"/>
    <property type="match status" value="1"/>
</dbReference>
<dbReference type="PROSITE" id="PS00297">
    <property type="entry name" value="HSP70_1"/>
    <property type="match status" value="1"/>
</dbReference>
<dbReference type="PROSITE" id="PS00329">
    <property type="entry name" value="HSP70_2"/>
    <property type="match status" value="1"/>
</dbReference>
<dbReference type="PROSITE" id="PS01036">
    <property type="entry name" value="HSP70_3"/>
    <property type="match status" value="1"/>
</dbReference>
<evidence type="ECO:0000255" key="1">
    <source>
        <dbReference type="HAMAP-Rule" id="MF_00679"/>
    </source>
</evidence>
<protein>
    <recommendedName>
        <fullName evidence="1">Chaperone protein HscA</fullName>
    </recommendedName>
    <alternativeName>
        <fullName evidence="1">Hsc66</fullName>
    </alternativeName>
</protein>
<keyword id="KW-0067">ATP-binding</keyword>
<keyword id="KW-0143">Chaperone</keyword>
<keyword id="KW-0547">Nucleotide-binding</keyword>
<name>HSCA_SALDC</name>
<sequence>MALLQISEPGLSAAPHQRRLAAGIDLGTTNSLVATVRSGQAETLPDHEGRHLLPSVVHYQQQGHTVGYAARDNAAQDTANTISSVKRMMGRSLADIQARYPHLPYRFKASVNGLPMIDTAAGLLNPVRVSADILKALAARASESLSGELDGVVITVPAYFDDAQRQGTKDAARLAGLHVLRLLNEPTAAAIAYGLDSGKEGVIAVYDLGGGTFDISILRLSRGVFEVLATGGDSALGGDDFDHLLADYIREQAGIADRSDNRVQRELLDAAIAAKIALSDADTVRVNVAGWQGEITREQFNDLISALVKRTLLACRRALKDAGVDPQDVLEVVMVGGSTRVPLVRERVGEFFGRTPLTAIDPDKVVAIGAAIQADILVGNKPDSEMLLLDVIPLSLGLETMGGLVEKVIPRNTTIPVARAQDFTTFKDGQTAMSIHVMQGERELVQDCRSLARFALRGIPPLPAGGAHIRVTFQVDADGLLSVTAMEKSTGVEASIQVKPSYGLTDGEIASMIKDSMSFAEQDVKARMLAEQKVEAARVLESLTGALTADAALLSAAERQCIDDAAAHLSAVAQGDDVDAIEQAIKNVDKQTQEFAARRMDQSVRRALKGHSVDEV</sequence>